<keyword id="KW-0067">ATP-binding</keyword>
<keyword id="KW-0131">Cell cycle</keyword>
<keyword id="KW-0132">Cell division</keyword>
<keyword id="KW-0133">Cell shape</keyword>
<keyword id="KW-0961">Cell wall biogenesis/degradation</keyword>
<keyword id="KW-0963">Cytoplasm</keyword>
<keyword id="KW-0436">Ligase</keyword>
<keyword id="KW-0547">Nucleotide-binding</keyword>
<keyword id="KW-0573">Peptidoglycan synthesis</keyword>
<keyword id="KW-1185">Reference proteome</keyword>
<reference key="1">
    <citation type="journal article" date="2001" name="Science">
        <title>The genome of the natural genetic engineer Agrobacterium tumefaciens C58.</title>
        <authorList>
            <person name="Wood D.W."/>
            <person name="Setubal J.C."/>
            <person name="Kaul R."/>
            <person name="Monks D.E."/>
            <person name="Kitajima J.P."/>
            <person name="Okura V.K."/>
            <person name="Zhou Y."/>
            <person name="Chen L."/>
            <person name="Wood G.E."/>
            <person name="Almeida N.F. Jr."/>
            <person name="Woo L."/>
            <person name="Chen Y."/>
            <person name="Paulsen I.T."/>
            <person name="Eisen J.A."/>
            <person name="Karp P.D."/>
            <person name="Bovee D. Sr."/>
            <person name="Chapman P."/>
            <person name="Clendenning J."/>
            <person name="Deatherage G."/>
            <person name="Gillet W."/>
            <person name="Grant C."/>
            <person name="Kutyavin T."/>
            <person name="Levy R."/>
            <person name="Li M.-J."/>
            <person name="McClelland E."/>
            <person name="Palmieri A."/>
            <person name="Raymond C."/>
            <person name="Rouse G."/>
            <person name="Saenphimmachak C."/>
            <person name="Wu Z."/>
            <person name="Romero P."/>
            <person name="Gordon D."/>
            <person name="Zhang S."/>
            <person name="Yoo H."/>
            <person name="Tao Y."/>
            <person name="Biddle P."/>
            <person name="Jung M."/>
            <person name="Krespan W."/>
            <person name="Perry M."/>
            <person name="Gordon-Kamm B."/>
            <person name="Liao L."/>
            <person name="Kim S."/>
            <person name="Hendrick C."/>
            <person name="Zhao Z.-Y."/>
            <person name="Dolan M."/>
            <person name="Chumley F."/>
            <person name="Tingey S.V."/>
            <person name="Tomb J.-F."/>
            <person name="Gordon M.P."/>
            <person name="Olson M.V."/>
            <person name="Nester E.W."/>
        </authorList>
    </citation>
    <scope>NUCLEOTIDE SEQUENCE [LARGE SCALE GENOMIC DNA]</scope>
    <source>
        <strain>C58 / ATCC 33970</strain>
    </source>
</reference>
<reference key="2">
    <citation type="journal article" date="2001" name="Science">
        <title>Genome sequence of the plant pathogen and biotechnology agent Agrobacterium tumefaciens C58.</title>
        <authorList>
            <person name="Goodner B."/>
            <person name="Hinkle G."/>
            <person name="Gattung S."/>
            <person name="Miller N."/>
            <person name="Blanchard M."/>
            <person name="Qurollo B."/>
            <person name="Goldman B.S."/>
            <person name="Cao Y."/>
            <person name="Askenazi M."/>
            <person name="Halling C."/>
            <person name="Mullin L."/>
            <person name="Houmiel K."/>
            <person name="Gordon J."/>
            <person name="Vaudin M."/>
            <person name="Iartchouk O."/>
            <person name="Epp A."/>
            <person name="Liu F."/>
            <person name="Wollam C."/>
            <person name="Allinger M."/>
            <person name="Doughty D."/>
            <person name="Scott C."/>
            <person name="Lappas C."/>
            <person name="Markelz B."/>
            <person name="Flanagan C."/>
            <person name="Crowell C."/>
            <person name="Gurson J."/>
            <person name="Lomo C."/>
            <person name="Sear C."/>
            <person name="Strub G."/>
            <person name="Cielo C."/>
            <person name="Slater S."/>
        </authorList>
    </citation>
    <scope>NUCLEOTIDE SEQUENCE [LARGE SCALE GENOMIC DNA]</scope>
    <source>
        <strain>C58 / ATCC 33970</strain>
    </source>
</reference>
<comment type="function">
    <text evidence="1">Cell wall formation.</text>
</comment>
<comment type="catalytic activity">
    <reaction evidence="1">
        <text>UDP-N-acetyl-alpha-D-muramate + L-alanine + ATP = UDP-N-acetyl-alpha-D-muramoyl-L-alanine + ADP + phosphate + H(+)</text>
        <dbReference type="Rhea" id="RHEA:23372"/>
        <dbReference type="ChEBI" id="CHEBI:15378"/>
        <dbReference type="ChEBI" id="CHEBI:30616"/>
        <dbReference type="ChEBI" id="CHEBI:43474"/>
        <dbReference type="ChEBI" id="CHEBI:57972"/>
        <dbReference type="ChEBI" id="CHEBI:70757"/>
        <dbReference type="ChEBI" id="CHEBI:83898"/>
        <dbReference type="ChEBI" id="CHEBI:456216"/>
        <dbReference type="EC" id="6.3.2.8"/>
    </reaction>
</comment>
<comment type="pathway">
    <text evidence="1">Cell wall biogenesis; peptidoglycan biosynthesis.</text>
</comment>
<comment type="subcellular location">
    <subcellularLocation>
        <location evidence="1">Cytoplasm</location>
    </subcellularLocation>
</comment>
<comment type="similarity">
    <text evidence="1">Belongs to the MurCDEF family.</text>
</comment>
<evidence type="ECO:0000255" key="1">
    <source>
        <dbReference type="HAMAP-Rule" id="MF_00046"/>
    </source>
</evidence>
<organism>
    <name type="scientific">Agrobacterium fabrum (strain C58 / ATCC 33970)</name>
    <name type="common">Agrobacterium tumefaciens (strain C58)</name>
    <dbReference type="NCBI Taxonomy" id="176299"/>
    <lineage>
        <taxon>Bacteria</taxon>
        <taxon>Pseudomonadati</taxon>
        <taxon>Pseudomonadota</taxon>
        <taxon>Alphaproteobacteria</taxon>
        <taxon>Hyphomicrobiales</taxon>
        <taxon>Rhizobiaceae</taxon>
        <taxon>Rhizobium/Agrobacterium group</taxon>
        <taxon>Agrobacterium</taxon>
        <taxon>Agrobacterium tumefaciens complex</taxon>
    </lineage>
</organism>
<proteinExistence type="inferred from homology"/>
<name>MURC_AGRFC</name>
<gene>
    <name evidence="1" type="primary">murC</name>
    <name type="ordered locus">Atu2093</name>
    <name type="ORF">AGR_C_3796</name>
</gene>
<accession>Q8UDM9</accession>
<feature type="chain" id="PRO_0000182044" description="UDP-N-acetylmuramate--L-alanine ligase">
    <location>
        <begin position="1"/>
        <end position="471"/>
    </location>
</feature>
<feature type="binding site" evidence="1">
    <location>
        <begin position="114"/>
        <end position="120"/>
    </location>
    <ligand>
        <name>ATP</name>
        <dbReference type="ChEBI" id="CHEBI:30616"/>
    </ligand>
</feature>
<protein>
    <recommendedName>
        <fullName evidence="1">UDP-N-acetylmuramate--L-alanine ligase</fullName>
        <ecNumber evidence="1">6.3.2.8</ecNumber>
    </recommendedName>
    <alternativeName>
        <fullName evidence="1">UDP-N-acetylmuramoyl-L-alanine synthetase</fullName>
    </alternativeName>
</protein>
<sequence length="471" mass="50800">MKMPKAIGLVHFIGIGGIGMSGIAEVLHNLGHRVQGSDQADSANVQRLRDKGIEVFVGHTADNLGDAEVVVVSTAIKKNNPELIAAREKHLPIVRRAEMLAELMRFRNAIAIGGTHGKTTTTSMVATLLEAGNLDPTVINGGIINAYGTNARMGEGEWMVVEADESDGTFLKLPADVAVITNIDPEHLDHYGNFDAVRAAFRQFVENVPFYGFGVMCLDHPEVQALVGRIEDRKVITYGENPQADVRFSNVRIDGTRSIFDVEIRRRRTGKIFSFKDLVLPMPGRHNVSNATAAIAVANRLGISEADIKKGLASFAGVKRRFTLTGEANGVQVFDDYGHHPVEIKAVLAAAREACKGRIIAVHQPHRYSRLSSLFDDFAHCFNDADTILLAPVYAAGEDPIEGASSEALVSAIKAAGHRDARFLEKREDLASQVAAIANPGDFVVLLGAGNITQWAAALPSELKSISGKSE</sequence>
<dbReference type="EC" id="6.3.2.8" evidence="1"/>
<dbReference type="EMBL" id="AE007869">
    <property type="protein sequence ID" value="AAK87843.1"/>
    <property type="molecule type" value="Genomic_DNA"/>
</dbReference>
<dbReference type="PIR" id="AF2833">
    <property type="entry name" value="AF2833"/>
</dbReference>
<dbReference type="PIR" id="B97611">
    <property type="entry name" value="B97611"/>
</dbReference>
<dbReference type="RefSeq" id="NP_355058.1">
    <property type="nucleotide sequence ID" value="NC_003062.2"/>
</dbReference>
<dbReference type="RefSeq" id="WP_010972052.1">
    <property type="nucleotide sequence ID" value="NC_003062.2"/>
</dbReference>
<dbReference type="SMR" id="Q8UDM9"/>
<dbReference type="STRING" id="176299.Atu2093"/>
<dbReference type="EnsemblBacteria" id="AAK87843">
    <property type="protein sequence ID" value="AAK87843"/>
    <property type="gene ID" value="Atu2093"/>
</dbReference>
<dbReference type="GeneID" id="1134131"/>
<dbReference type="KEGG" id="atu:Atu2093"/>
<dbReference type="PATRIC" id="fig|176299.10.peg.2107"/>
<dbReference type="eggNOG" id="COG0773">
    <property type="taxonomic scope" value="Bacteria"/>
</dbReference>
<dbReference type="HOGENOM" id="CLU_028104_2_2_5"/>
<dbReference type="OrthoDB" id="9804126at2"/>
<dbReference type="PhylomeDB" id="Q8UDM9"/>
<dbReference type="BioCyc" id="AGRO:ATU2093-MONOMER"/>
<dbReference type="UniPathway" id="UPA00219"/>
<dbReference type="Proteomes" id="UP000000813">
    <property type="component" value="Chromosome circular"/>
</dbReference>
<dbReference type="GO" id="GO:0005737">
    <property type="term" value="C:cytoplasm"/>
    <property type="evidence" value="ECO:0007669"/>
    <property type="project" value="UniProtKB-SubCell"/>
</dbReference>
<dbReference type="GO" id="GO:0005524">
    <property type="term" value="F:ATP binding"/>
    <property type="evidence" value="ECO:0007669"/>
    <property type="project" value="UniProtKB-UniRule"/>
</dbReference>
<dbReference type="GO" id="GO:0008763">
    <property type="term" value="F:UDP-N-acetylmuramate-L-alanine ligase activity"/>
    <property type="evidence" value="ECO:0007669"/>
    <property type="project" value="UniProtKB-UniRule"/>
</dbReference>
<dbReference type="GO" id="GO:0051301">
    <property type="term" value="P:cell division"/>
    <property type="evidence" value="ECO:0007669"/>
    <property type="project" value="UniProtKB-KW"/>
</dbReference>
<dbReference type="GO" id="GO:0071555">
    <property type="term" value="P:cell wall organization"/>
    <property type="evidence" value="ECO:0007669"/>
    <property type="project" value="UniProtKB-KW"/>
</dbReference>
<dbReference type="GO" id="GO:0009252">
    <property type="term" value="P:peptidoglycan biosynthetic process"/>
    <property type="evidence" value="ECO:0007669"/>
    <property type="project" value="UniProtKB-UniRule"/>
</dbReference>
<dbReference type="GO" id="GO:0008360">
    <property type="term" value="P:regulation of cell shape"/>
    <property type="evidence" value="ECO:0007669"/>
    <property type="project" value="UniProtKB-KW"/>
</dbReference>
<dbReference type="Gene3D" id="3.90.190.20">
    <property type="entry name" value="Mur ligase, C-terminal domain"/>
    <property type="match status" value="1"/>
</dbReference>
<dbReference type="Gene3D" id="3.40.1190.10">
    <property type="entry name" value="Mur-like, catalytic domain"/>
    <property type="match status" value="1"/>
</dbReference>
<dbReference type="Gene3D" id="3.40.50.720">
    <property type="entry name" value="NAD(P)-binding Rossmann-like Domain"/>
    <property type="match status" value="1"/>
</dbReference>
<dbReference type="HAMAP" id="MF_00046">
    <property type="entry name" value="MurC"/>
    <property type="match status" value="1"/>
</dbReference>
<dbReference type="InterPro" id="IPR036565">
    <property type="entry name" value="Mur-like_cat_sf"/>
</dbReference>
<dbReference type="InterPro" id="IPR004101">
    <property type="entry name" value="Mur_ligase_C"/>
</dbReference>
<dbReference type="InterPro" id="IPR036615">
    <property type="entry name" value="Mur_ligase_C_dom_sf"/>
</dbReference>
<dbReference type="InterPro" id="IPR013221">
    <property type="entry name" value="Mur_ligase_cen"/>
</dbReference>
<dbReference type="InterPro" id="IPR000713">
    <property type="entry name" value="Mur_ligase_N"/>
</dbReference>
<dbReference type="InterPro" id="IPR050061">
    <property type="entry name" value="MurCDEF_pg_biosynth"/>
</dbReference>
<dbReference type="InterPro" id="IPR005758">
    <property type="entry name" value="UDP-N-AcMur_Ala_ligase_MurC"/>
</dbReference>
<dbReference type="NCBIfam" id="TIGR01082">
    <property type="entry name" value="murC"/>
    <property type="match status" value="1"/>
</dbReference>
<dbReference type="PANTHER" id="PTHR43445:SF3">
    <property type="entry name" value="UDP-N-ACETYLMURAMATE--L-ALANINE LIGASE"/>
    <property type="match status" value="1"/>
</dbReference>
<dbReference type="PANTHER" id="PTHR43445">
    <property type="entry name" value="UDP-N-ACETYLMURAMATE--L-ALANINE LIGASE-RELATED"/>
    <property type="match status" value="1"/>
</dbReference>
<dbReference type="Pfam" id="PF01225">
    <property type="entry name" value="Mur_ligase"/>
    <property type="match status" value="1"/>
</dbReference>
<dbReference type="Pfam" id="PF02875">
    <property type="entry name" value="Mur_ligase_C"/>
    <property type="match status" value="1"/>
</dbReference>
<dbReference type="Pfam" id="PF08245">
    <property type="entry name" value="Mur_ligase_M"/>
    <property type="match status" value="1"/>
</dbReference>
<dbReference type="SUPFAM" id="SSF51984">
    <property type="entry name" value="MurCD N-terminal domain"/>
    <property type="match status" value="1"/>
</dbReference>
<dbReference type="SUPFAM" id="SSF53623">
    <property type="entry name" value="MurD-like peptide ligases, catalytic domain"/>
    <property type="match status" value="1"/>
</dbReference>
<dbReference type="SUPFAM" id="SSF53244">
    <property type="entry name" value="MurD-like peptide ligases, peptide-binding domain"/>
    <property type="match status" value="1"/>
</dbReference>